<accession>Q0VRV7</accession>
<proteinExistence type="inferred from homology"/>
<evidence type="ECO:0000255" key="1">
    <source>
        <dbReference type="HAMAP-Rule" id="MF_00072"/>
    </source>
</evidence>
<reference key="1">
    <citation type="journal article" date="2006" name="Nat. Biotechnol.">
        <title>Genome sequence of the ubiquitous hydrocarbon-degrading marine bacterium Alcanivorax borkumensis.</title>
        <authorList>
            <person name="Schneiker S."/>
            <person name="Martins dos Santos V.A.P."/>
            <person name="Bartels D."/>
            <person name="Bekel T."/>
            <person name="Brecht M."/>
            <person name="Buhrmester J."/>
            <person name="Chernikova T.N."/>
            <person name="Denaro R."/>
            <person name="Ferrer M."/>
            <person name="Gertler C."/>
            <person name="Goesmann A."/>
            <person name="Golyshina O.V."/>
            <person name="Kaminski F."/>
            <person name="Khachane A.N."/>
            <person name="Lang S."/>
            <person name="Linke B."/>
            <person name="McHardy A.C."/>
            <person name="Meyer F."/>
            <person name="Nechitaylo T."/>
            <person name="Puehler A."/>
            <person name="Regenhardt D."/>
            <person name="Rupp O."/>
            <person name="Sabirova J.S."/>
            <person name="Selbitschka W."/>
            <person name="Yakimov M.M."/>
            <person name="Timmis K.N."/>
            <person name="Vorhoelter F.-J."/>
            <person name="Weidner S."/>
            <person name="Kaiser O."/>
            <person name="Golyshin P.N."/>
        </authorList>
    </citation>
    <scope>NUCLEOTIDE SEQUENCE [LARGE SCALE GENOMIC DNA]</scope>
    <source>
        <strain>ATCC 700651 / DSM 11573 / NCIMB 13689 / SK2</strain>
    </source>
</reference>
<sequence length="529" mass="58774">MSPMSLQDQVATRRTFAIISHPDAGKTTITEKLLLYGNLIQSAGTVKGKKSGKHATSDWMEMEKERGISVTTSVMQFPYKGATVNLLDTPGHADFSEDTYRTLTAVDSALMVIDAAKGVEQRTVKLMEVCRLRDTPILTFINKLDRDVRDGIDVLDEIEDVLNIECAPITWPIGMGKSFKGVYNLLTDTTVLYKTGQGHTVQDVREVKGLNNPELDEAVGTDYAEELRDTLELVQGASHEFDLERFLAGKLTPVFFGTALGNFGVDHMLDGLVQWAPPPQPRDATARTVEADEPKMTGFVFKIQANMDPRHRDRIAFMRICSGTYRKGIKLKQVRTGKDVRIADALTFLAGERDNVEEAFSGDIIGLHNHGTIQIGDTFTEGEELAFTGIPHFAPELFQRVVLNDPLKSKQLHKGLTQLAEEGATQVFFPLRNNDVILGAVGSLQFDVVAARLKGEYGVDCRYEPVSVATARWVEADSDKELAAFERKAHDNLSRDGAGHLTYLAPTRVNLQLAQERHPDIRFRETREI</sequence>
<name>RF3_ALCBS</name>
<comment type="function">
    <text evidence="1">Increases the formation of ribosomal termination complexes and stimulates activities of RF-1 and RF-2. It binds guanine nucleotides and has strong preference for UGA stop codons. It may interact directly with the ribosome. The stimulation of RF-1 and RF-2 is significantly reduced by GTP and GDP, but not by GMP.</text>
</comment>
<comment type="subcellular location">
    <subcellularLocation>
        <location evidence="1">Cytoplasm</location>
    </subcellularLocation>
</comment>
<comment type="similarity">
    <text evidence="1">Belongs to the TRAFAC class translation factor GTPase superfamily. Classic translation factor GTPase family. PrfC subfamily.</text>
</comment>
<organism>
    <name type="scientific">Alcanivorax borkumensis (strain ATCC 700651 / DSM 11573 / NCIMB 13689 / SK2)</name>
    <dbReference type="NCBI Taxonomy" id="393595"/>
    <lineage>
        <taxon>Bacteria</taxon>
        <taxon>Pseudomonadati</taxon>
        <taxon>Pseudomonadota</taxon>
        <taxon>Gammaproteobacteria</taxon>
        <taxon>Oceanospirillales</taxon>
        <taxon>Alcanivoracaceae</taxon>
        <taxon>Alcanivorax</taxon>
    </lineage>
</organism>
<feature type="chain" id="PRO_1000023640" description="Peptide chain release factor 3">
    <location>
        <begin position="1"/>
        <end position="529"/>
    </location>
</feature>
<feature type="domain" description="tr-type G">
    <location>
        <begin position="11"/>
        <end position="280"/>
    </location>
</feature>
<feature type="binding site" evidence="1">
    <location>
        <begin position="20"/>
        <end position="27"/>
    </location>
    <ligand>
        <name>GTP</name>
        <dbReference type="ChEBI" id="CHEBI:37565"/>
    </ligand>
</feature>
<feature type="binding site" evidence="1">
    <location>
        <begin position="88"/>
        <end position="92"/>
    </location>
    <ligand>
        <name>GTP</name>
        <dbReference type="ChEBI" id="CHEBI:37565"/>
    </ligand>
</feature>
<feature type="binding site" evidence="1">
    <location>
        <begin position="142"/>
        <end position="145"/>
    </location>
    <ligand>
        <name>GTP</name>
        <dbReference type="ChEBI" id="CHEBI:37565"/>
    </ligand>
</feature>
<keyword id="KW-0963">Cytoplasm</keyword>
<keyword id="KW-0342">GTP-binding</keyword>
<keyword id="KW-0547">Nucleotide-binding</keyword>
<keyword id="KW-0648">Protein biosynthesis</keyword>
<keyword id="KW-1185">Reference proteome</keyword>
<dbReference type="EMBL" id="AM286690">
    <property type="protein sequence ID" value="CAL16091.1"/>
    <property type="molecule type" value="Genomic_DNA"/>
</dbReference>
<dbReference type="SMR" id="Q0VRV7"/>
<dbReference type="STRING" id="393595.ABO_0643"/>
<dbReference type="KEGG" id="abo:ABO_0643"/>
<dbReference type="eggNOG" id="COG4108">
    <property type="taxonomic scope" value="Bacteria"/>
</dbReference>
<dbReference type="HOGENOM" id="CLU_002794_2_1_6"/>
<dbReference type="Proteomes" id="UP000008871">
    <property type="component" value="Chromosome"/>
</dbReference>
<dbReference type="GO" id="GO:0005829">
    <property type="term" value="C:cytosol"/>
    <property type="evidence" value="ECO:0007669"/>
    <property type="project" value="TreeGrafter"/>
</dbReference>
<dbReference type="GO" id="GO:0005525">
    <property type="term" value="F:GTP binding"/>
    <property type="evidence" value="ECO:0007669"/>
    <property type="project" value="UniProtKB-UniRule"/>
</dbReference>
<dbReference type="GO" id="GO:0003924">
    <property type="term" value="F:GTPase activity"/>
    <property type="evidence" value="ECO:0007669"/>
    <property type="project" value="InterPro"/>
</dbReference>
<dbReference type="GO" id="GO:0097216">
    <property type="term" value="F:guanosine tetraphosphate binding"/>
    <property type="evidence" value="ECO:0007669"/>
    <property type="project" value="UniProtKB-ARBA"/>
</dbReference>
<dbReference type="GO" id="GO:0016150">
    <property type="term" value="F:translation release factor activity, codon nonspecific"/>
    <property type="evidence" value="ECO:0007669"/>
    <property type="project" value="TreeGrafter"/>
</dbReference>
<dbReference type="GO" id="GO:0016149">
    <property type="term" value="F:translation release factor activity, codon specific"/>
    <property type="evidence" value="ECO:0007669"/>
    <property type="project" value="UniProtKB-UniRule"/>
</dbReference>
<dbReference type="GO" id="GO:0006449">
    <property type="term" value="P:regulation of translational termination"/>
    <property type="evidence" value="ECO:0007669"/>
    <property type="project" value="UniProtKB-UniRule"/>
</dbReference>
<dbReference type="CDD" id="cd04169">
    <property type="entry name" value="RF3"/>
    <property type="match status" value="1"/>
</dbReference>
<dbReference type="CDD" id="cd03689">
    <property type="entry name" value="RF3_II"/>
    <property type="match status" value="1"/>
</dbReference>
<dbReference type="CDD" id="cd16259">
    <property type="entry name" value="RF3_III"/>
    <property type="match status" value="1"/>
</dbReference>
<dbReference type="FunFam" id="3.30.70.3280:FF:000001">
    <property type="entry name" value="Peptide chain release factor 3"/>
    <property type="match status" value="1"/>
</dbReference>
<dbReference type="FunFam" id="3.40.50.300:FF:000542">
    <property type="entry name" value="Peptide chain release factor 3"/>
    <property type="match status" value="1"/>
</dbReference>
<dbReference type="Gene3D" id="3.40.50.300">
    <property type="entry name" value="P-loop containing nucleotide triphosphate hydrolases"/>
    <property type="match status" value="2"/>
</dbReference>
<dbReference type="Gene3D" id="3.30.70.3280">
    <property type="entry name" value="Peptide chain release factor 3, domain III"/>
    <property type="match status" value="1"/>
</dbReference>
<dbReference type="HAMAP" id="MF_00072">
    <property type="entry name" value="Rel_fac_3"/>
    <property type="match status" value="1"/>
</dbReference>
<dbReference type="InterPro" id="IPR053905">
    <property type="entry name" value="EF-G-like_DII"/>
</dbReference>
<dbReference type="InterPro" id="IPR035647">
    <property type="entry name" value="EFG_III/V"/>
</dbReference>
<dbReference type="InterPro" id="IPR031157">
    <property type="entry name" value="G_TR_CS"/>
</dbReference>
<dbReference type="InterPro" id="IPR027417">
    <property type="entry name" value="P-loop_NTPase"/>
</dbReference>
<dbReference type="InterPro" id="IPR004548">
    <property type="entry name" value="PrfC"/>
</dbReference>
<dbReference type="InterPro" id="IPR032090">
    <property type="entry name" value="RF3_C"/>
</dbReference>
<dbReference type="InterPro" id="IPR038467">
    <property type="entry name" value="RF3_dom_3_sf"/>
</dbReference>
<dbReference type="InterPro" id="IPR041732">
    <property type="entry name" value="RF3_GTP-bd"/>
</dbReference>
<dbReference type="InterPro" id="IPR005225">
    <property type="entry name" value="Small_GTP-bd"/>
</dbReference>
<dbReference type="InterPro" id="IPR000795">
    <property type="entry name" value="T_Tr_GTP-bd_dom"/>
</dbReference>
<dbReference type="InterPro" id="IPR009000">
    <property type="entry name" value="Transl_B-barrel_sf"/>
</dbReference>
<dbReference type="NCBIfam" id="TIGR00503">
    <property type="entry name" value="prfC"/>
    <property type="match status" value="1"/>
</dbReference>
<dbReference type="NCBIfam" id="NF001964">
    <property type="entry name" value="PRK00741.1"/>
    <property type="match status" value="1"/>
</dbReference>
<dbReference type="NCBIfam" id="TIGR00231">
    <property type="entry name" value="small_GTP"/>
    <property type="match status" value="1"/>
</dbReference>
<dbReference type="PANTHER" id="PTHR43556">
    <property type="entry name" value="PEPTIDE CHAIN RELEASE FACTOR RF3"/>
    <property type="match status" value="1"/>
</dbReference>
<dbReference type="PANTHER" id="PTHR43556:SF2">
    <property type="entry name" value="PEPTIDE CHAIN RELEASE FACTOR RF3"/>
    <property type="match status" value="1"/>
</dbReference>
<dbReference type="Pfam" id="PF22042">
    <property type="entry name" value="EF-G_D2"/>
    <property type="match status" value="1"/>
</dbReference>
<dbReference type="Pfam" id="PF00009">
    <property type="entry name" value="GTP_EFTU"/>
    <property type="match status" value="1"/>
</dbReference>
<dbReference type="Pfam" id="PF16658">
    <property type="entry name" value="RF3_C"/>
    <property type="match status" value="1"/>
</dbReference>
<dbReference type="PRINTS" id="PR00315">
    <property type="entry name" value="ELONGATNFCT"/>
</dbReference>
<dbReference type="SUPFAM" id="SSF54980">
    <property type="entry name" value="EF-G C-terminal domain-like"/>
    <property type="match status" value="1"/>
</dbReference>
<dbReference type="SUPFAM" id="SSF52540">
    <property type="entry name" value="P-loop containing nucleoside triphosphate hydrolases"/>
    <property type="match status" value="1"/>
</dbReference>
<dbReference type="SUPFAM" id="SSF50447">
    <property type="entry name" value="Translation proteins"/>
    <property type="match status" value="1"/>
</dbReference>
<dbReference type="PROSITE" id="PS00301">
    <property type="entry name" value="G_TR_1"/>
    <property type="match status" value="1"/>
</dbReference>
<dbReference type="PROSITE" id="PS51722">
    <property type="entry name" value="G_TR_2"/>
    <property type="match status" value="1"/>
</dbReference>
<gene>
    <name evidence="1" type="primary">prfC</name>
    <name type="ordered locus">ABO_0643</name>
</gene>
<protein>
    <recommendedName>
        <fullName evidence="1">Peptide chain release factor 3</fullName>
        <shortName evidence="1">RF-3</shortName>
    </recommendedName>
</protein>